<name>LTOR4_HUMAN</name>
<accession>Q0VGL1</accession>
<gene>
    <name evidence="18 20" type="primary">LAMTOR4</name>
    <name evidence="18 20" type="synonym">C7orf59</name>
</gene>
<evidence type="ECO:0000269" key="1">
    <source>
    </source>
</evidence>
<evidence type="ECO:0000269" key="2">
    <source>
    </source>
</evidence>
<evidence type="ECO:0000269" key="3">
    <source>
    </source>
</evidence>
<evidence type="ECO:0000269" key="4">
    <source>
    </source>
</evidence>
<evidence type="ECO:0000269" key="5">
    <source>
    </source>
</evidence>
<evidence type="ECO:0000269" key="6">
    <source>
    </source>
</evidence>
<evidence type="ECO:0000269" key="7">
    <source>
    </source>
</evidence>
<evidence type="ECO:0000269" key="8">
    <source>
    </source>
</evidence>
<evidence type="ECO:0000269" key="9">
    <source>
    </source>
</evidence>
<evidence type="ECO:0000269" key="10">
    <source>
    </source>
</evidence>
<evidence type="ECO:0000269" key="11">
    <source>
    </source>
</evidence>
<evidence type="ECO:0000269" key="12">
    <source>
    </source>
</evidence>
<evidence type="ECO:0000269" key="13">
    <source>
    </source>
</evidence>
<evidence type="ECO:0000269" key="14">
    <source>
    </source>
</evidence>
<evidence type="ECO:0000269" key="15">
    <source>
    </source>
</evidence>
<evidence type="ECO:0000269" key="16">
    <source>
    </source>
</evidence>
<evidence type="ECO:0000269" key="17">
    <source>
    </source>
</evidence>
<evidence type="ECO:0000303" key="18">
    <source>
    </source>
</evidence>
<evidence type="ECO:0000305" key="19"/>
<evidence type="ECO:0000312" key="20">
    <source>
        <dbReference type="HGNC" id="HGNC:33772"/>
    </source>
</evidence>
<evidence type="ECO:0007744" key="21">
    <source>
        <dbReference type="PDB" id="5VOK"/>
    </source>
</evidence>
<evidence type="ECO:0007744" key="22">
    <source>
        <dbReference type="PDB" id="5X6U"/>
    </source>
</evidence>
<evidence type="ECO:0007744" key="23">
    <source>
        <dbReference type="PDB" id="5X6V"/>
    </source>
</evidence>
<evidence type="ECO:0007744" key="24">
    <source>
        <dbReference type="PDB" id="5Y38"/>
    </source>
</evidence>
<evidence type="ECO:0007744" key="25">
    <source>
        <dbReference type="PDB" id="5Y39"/>
    </source>
</evidence>
<evidence type="ECO:0007744" key="26">
    <source>
        <dbReference type="PDB" id="5Y3A"/>
    </source>
</evidence>
<evidence type="ECO:0007744" key="27">
    <source>
        <dbReference type="PDB" id="5YK3"/>
    </source>
</evidence>
<evidence type="ECO:0007744" key="28">
    <source>
        <dbReference type="PDB" id="5YK5"/>
    </source>
</evidence>
<evidence type="ECO:0007744" key="29">
    <source>
        <dbReference type="PDB" id="6B9X"/>
    </source>
</evidence>
<evidence type="ECO:0007744" key="30">
    <source>
        <dbReference type="PDB" id="6EHP"/>
    </source>
</evidence>
<evidence type="ECO:0007744" key="31">
    <source>
        <dbReference type="PDB" id="6EHR"/>
    </source>
</evidence>
<evidence type="ECO:0007744" key="32">
    <source>
        <dbReference type="PDB" id="6NZD"/>
    </source>
</evidence>
<evidence type="ECO:0007744" key="33">
    <source>
        <dbReference type="PDB" id="6U62"/>
    </source>
</evidence>
<evidence type="ECO:0007744" key="34">
    <source>
        <dbReference type="PDB" id="6ULG"/>
    </source>
</evidence>
<evidence type="ECO:0007744" key="35">
    <source>
        <dbReference type="PDB" id="6WJ2"/>
    </source>
</evidence>
<evidence type="ECO:0007744" key="36">
    <source>
        <dbReference type="PDB" id="6WJ3"/>
    </source>
</evidence>
<evidence type="ECO:0007744" key="37">
    <source>
        <dbReference type="PDB" id="7T3A"/>
    </source>
</evidence>
<evidence type="ECO:0007744" key="38">
    <source>
        <dbReference type="PDB" id="7T3B"/>
    </source>
</evidence>
<evidence type="ECO:0007744" key="39">
    <source>
        <dbReference type="PDB" id="7T3C"/>
    </source>
</evidence>
<evidence type="ECO:0007744" key="40">
    <source>
        <dbReference type="PDB" id="7UX2"/>
    </source>
</evidence>
<evidence type="ECO:0007744" key="41">
    <source>
        <dbReference type="PDB" id="7UXC"/>
    </source>
</evidence>
<evidence type="ECO:0007744" key="42">
    <source>
        <dbReference type="PDB" id="7UXH"/>
    </source>
</evidence>
<evidence type="ECO:0007744" key="43">
    <source>
        <dbReference type="PDB" id="8DHB"/>
    </source>
</evidence>
<evidence type="ECO:0007744" key="44">
    <source>
    </source>
</evidence>
<evidence type="ECO:0007744" key="45">
    <source>
    </source>
</evidence>
<evidence type="ECO:0007744" key="46">
    <source>
    </source>
</evidence>
<evidence type="ECO:0007829" key="47">
    <source>
        <dbReference type="PDB" id="5VOK"/>
    </source>
</evidence>
<evidence type="ECO:0007829" key="48">
    <source>
        <dbReference type="PDB" id="6B9X"/>
    </source>
</evidence>
<feature type="chain" id="PRO_0000325841" description="Ragulator complex protein LAMTOR4">
    <location>
        <begin position="1"/>
        <end position="99"/>
    </location>
</feature>
<feature type="initiator methionine" description="Removed; alternate" evidence="44 45 46">
    <location>
        <position position="1"/>
    </location>
</feature>
<feature type="chain" id="PRO_0000424498" description="Ragulator complex protein LAMTOR4, N-terminally processed">
    <location>
        <begin position="2"/>
        <end position="99"/>
    </location>
</feature>
<feature type="modified residue" description="N-acetylmethionine" evidence="45">
    <location>
        <position position="1"/>
    </location>
</feature>
<feature type="modified residue" description="N-acetylthreonine; in Ragulator complex protein LAMTOR4, N-terminally processed" evidence="44 45 46">
    <location>
        <position position="2"/>
    </location>
</feature>
<feature type="modified residue" description="Phosphoserine; by PKA" evidence="10">
    <location>
        <position position="67"/>
    </location>
</feature>
<feature type="mutagenesis site" description="Does not affect Ragulator complex assembly." evidence="10">
    <original>EN</original>
    <variation>AA</variation>
    <location>
        <begin position="34"/>
        <end position="35"/>
    </location>
</feature>
<feature type="mutagenesis site" description="Does not affect Ragulator complex assembly." evidence="10">
    <original>DE</original>
    <variation>AA</variation>
    <location>
        <begin position="36"/>
        <end position="37"/>
    </location>
</feature>
<feature type="mutagenesis site" description="Mimics phosphorylation; inhibiting Ragulator complex assembly." evidence="10">
    <original>S</original>
    <variation>D</variation>
    <location>
        <position position="67"/>
    </location>
</feature>
<feature type="helix" evidence="48">
    <location>
        <begin position="4"/>
        <end position="10"/>
    </location>
</feature>
<feature type="strand" evidence="48">
    <location>
        <begin position="15"/>
        <end position="22"/>
    </location>
</feature>
<feature type="strand" evidence="48">
    <location>
        <begin position="25"/>
        <end position="31"/>
    </location>
</feature>
<feature type="turn" evidence="48">
    <location>
        <begin position="32"/>
        <end position="35"/>
    </location>
</feature>
<feature type="helix" evidence="48">
    <location>
        <begin position="37"/>
        <end position="52"/>
    </location>
</feature>
<feature type="strand" evidence="47">
    <location>
        <begin position="56"/>
        <end position="58"/>
    </location>
</feature>
<feature type="strand" evidence="48">
    <location>
        <begin position="59"/>
        <end position="62"/>
    </location>
</feature>
<feature type="strand" evidence="48">
    <location>
        <begin position="64"/>
        <end position="69"/>
    </location>
</feature>
<feature type="strand" evidence="48">
    <location>
        <begin position="71"/>
        <end position="80"/>
    </location>
</feature>
<feature type="strand" evidence="48">
    <location>
        <begin position="83"/>
        <end position="90"/>
    </location>
</feature>
<keyword id="KW-0002">3D-structure</keyword>
<keyword id="KW-0007">Acetylation</keyword>
<keyword id="KW-0458">Lysosome</keyword>
<keyword id="KW-0597">Phosphoprotein</keyword>
<keyword id="KW-1267">Proteomics identification</keyword>
<keyword id="KW-1185">Reference proteome</keyword>
<comment type="function">
    <text evidence="1 4 5 7 9">As part of the Ragulator complex it is involved in amino acid sensing and activation of mTORC1, a signaling complex promoting cell growth in response to growth factors, energy levels, and amino acids (PubMed:22980980, PubMed:28935770, PubMed:29107538, PubMed:29158492, PubMed:30181260). Activated by amino acids through a mechanism involving the lysosomal V-ATPase, the Ragulator plays a dual role for the small GTPases Rag (RagA/RRAGA, RagB/RRAGB, RagC/RRAGC and/or RagD/RRAGD): it (1) acts as a guanine nucleotide exchange factor (GEF), activating the small GTPases Rag and (2) mediates recruitment of Rag GTPases to the lysosome membrane (PubMed:22980980, PubMed:28935770, PubMed:29107538, PubMed:29158492, PubMed:30181260). Activated Ragulator and Rag GTPases function as a scaffold recruiting mTORC1 to lysosomes where it is in turn activated (PubMed:22980980, PubMed:28935770, PubMed:29107538, PubMed:29158492, PubMed:30181260).</text>
</comment>
<comment type="subunit">
    <text evidence="1 2 3 4 5 6 7 8 11 12 13 14 15 16 17">Part of the Ragulator complex composed of LAMTOR1, LAMTOR2, LAMTOR3, LAMTOR4 and LAMTOR5 (PubMed:22980980, PubMed:28935770, PubMed:29107538, PubMed:29123114, PubMed:29158492, PubMed:29285400, PubMed:31601708, PubMed:32868926, PubMed:35338845, PubMed:36103527, PubMed:36697823). LAMTOR4 and LAMTOR5 form a heterodimer that interacts, through LAMTOR1, with a LAMTOR2, LAMTOR3 heterodimer (PubMed:22980980). The Ragulator complex interacts with both the mTORC1 complex and heterodimers constituted of the Rag GTPases RagA/RRAGA, RagB/RRAGB, RagC/RRAGC and RagD/RRAGD; regulated by amino acid availability (PubMed:22980980, PubMed:32868926). The Ragulator complex interacts with SLC38A9; the probable amino acid sensor (PubMed:25561175, PubMed:25567906, PubMed:32868926). Component of the lysosomal folliculin complex (LFC), composed of FLCN, FNIP1 (or FNIP2), RagA/RRAGA or RagB/RRAGB GDP-bound, RagC/RRAGC or RagD/RRAGD GTP-bound, and Ragulator (PubMed:31672913, PubMed:31704029, PubMed:32868926).</text>
</comment>
<comment type="interaction">
    <interactant intactId="EBI-5658976">
        <id>Q0VGL1</id>
    </interactant>
    <interactant intactId="EBI-715385">
        <id>Q6IAA8</id>
        <label>LAMTOR1</label>
    </interactant>
    <organismsDiffer>false</organismsDiffer>
    <experiments>13</experiments>
</comment>
<comment type="interaction">
    <interactant intactId="EBI-5658976">
        <id>Q0VGL1</id>
    </interactant>
    <interactant intactId="EBI-713382">
        <id>O43504</id>
        <label>LAMTOR5</label>
    </interactant>
    <organismsDiffer>false</organismsDiffer>
    <experiments>19</experiments>
</comment>
<comment type="interaction">
    <interactant intactId="EBI-5658976">
        <id>Q0VGL1</id>
    </interactant>
    <interactant intactId="EBI-9978316">
        <id>Q8NBW4</id>
        <label>SLC38A9</label>
    </interactant>
    <organismsDiffer>false</organismsDiffer>
    <experiments>6</experiments>
</comment>
<comment type="subcellular location">
    <subcellularLocation>
        <location evidence="1">Lysosome</location>
    </subcellularLocation>
</comment>
<comment type="PTM">
    <text evidence="10">Phosphorylation at Ser-67 by PKA inhibits Ragulator complex assembly.</text>
</comment>
<comment type="similarity">
    <text evidence="19">Belongs to the LAMTOR4 family.</text>
</comment>
<organism>
    <name type="scientific">Homo sapiens</name>
    <name type="common">Human</name>
    <dbReference type="NCBI Taxonomy" id="9606"/>
    <lineage>
        <taxon>Eukaryota</taxon>
        <taxon>Metazoa</taxon>
        <taxon>Chordata</taxon>
        <taxon>Craniata</taxon>
        <taxon>Vertebrata</taxon>
        <taxon>Euteleostomi</taxon>
        <taxon>Mammalia</taxon>
        <taxon>Eutheria</taxon>
        <taxon>Euarchontoglires</taxon>
        <taxon>Primates</taxon>
        <taxon>Haplorrhini</taxon>
        <taxon>Catarrhini</taxon>
        <taxon>Hominidae</taxon>
        <taxon>Homo</taxon>
    </lineage>
</organism>
<reference key="1">
    <citation type="submission" date="2005-09" db="EMBL/GenBank/DDBJ databases">
        <authorList>
            <person name="Mural R.J."/>
            <person name="Istrail S."/>
            <person name="Sutton G.G."/>
            <person name="Florea L."/>
            <person name="Halpern A.L."/>
            <person name="Mobarry C.M."/>
            <person name="Lippert R."/>
            <person name="Walenz B."/>
            <person name="Shatkay H."/>
            <person name="Dew I."/>
            <person name="Miller J.R."/>
            <person name="Flanigan M.J."/>
            <person name="Edwards N.J."/>
            <person name="Bolanos R."/>
            <person name="Fasulo D."/>
            <person name="Halldorsson B.V."/>
            <person name="Hannenhalli S."/>
            <person name="Turner R."/>
            <person name="Yooseph S."/>
            <person name="Lu F."/>
            <person name="Nusskern D.R."/>
            <person name="Shue B.C."/>
            <person name="Zheng X.H."/>
            <person name="Zhong F."/>
            <person name="Delcher A.L."/>
            <person name="Huson D.H."/>
            <person name="Kravitz S.A."/>
            <person name="Mouchard L."/>
            <person name="Reinert K."/>
            <person name="Remington K.A."/>
            <person name="Clark A.G."/>
            <person name="Waterman M.S."/>
            <person name="Eichler E.E."/>
            <person name="Adams M.D."/>
            <person name="Hunkapiller M.W."/>
            <person name="Myers E.W."/>
            <person name="Venter J.C."/>
        </authorList>
    </citation>
    <scope>NUCLEOTIDE SEQUENCE [LARGE SCALE GENOMIC DNA]</scope>
</reference>
<reference key="2">
    <citation type="journal article" date="2004" name="Genome Res.">
        <title>The status, quality, and expansion of the NIH full-length cDNA project: the Mammalian Gene Collection (MGC).</title>
        <authorList>
            <consortium name="The MGC Project Team"/>
        </authorList>
    </citation>
    <scope>NUCLEOTIDE SEQUENCE [LARGE SCALE MRNA]</scope>
    <source>
        <tissue>Brain</tissue>
        <tissue>Skin</tissue>
    </source>
</reference>
<reference key="3">
    <citation type="journal article" date="2009" name="Anal. Chem.">
        <title>Lys-N and trypsin cover complementary parts of the phosphoproteome in a refined SCX-based approach.</title>
        <authorList>
            <person name="Gauci S."/>
            <person name="Helbig A.O."/>
            <person name="Slijper M."/>
            <person name="Krijgsveld J."/>
            <person name="Heck A.J."/>
            <person name="Mohammed S."/>
        </authorList>
    </citation>
    <scope>ACETYLATION [LARGE SCALE ANALYSIS] AT THR-2</scope>
    <scope>CLEAVAGE OF INITIATOR METHIONINE [LARGE SCALE ANALYSIS]</scope>
    <scope>IDENTIFICATION BY MASS SPECTROMETRY [LARGE SCALE ANALYSIS]</scope>
</reference>
<reference key="4">
    <citation type="journal article" date="2011" name="BMC Syst. Biol.">
        <title>Initial characterization of the human central proteome.</title>
        <authorList>
            <person name="Burkard T.R."/>
            <person name="Planyavsky M."/>
            <person name="Kaupe I."/>
            <person name="Breitwieser F.P."/>
            <person name="Buerckstuemmer T."/>
            <person name="Bennett K.L."/>
            <person name="Superti-Furga G."/>
            <person name="Colinge J."/>
        </authorList>
    </citation>
    <scope>IDENTIFICATION BY MASS SPECTROMETRY [LARGE SCALE ANALYSIS]</scope>
</reference>
<reference key="5">
    <citation type="journal article" date="2012" name="Cell">
        <title>Ragulator is a GEF for the Rag GTPases that signal amino acid levels to mTORC1.</title>
        <authorList>
            <person name="Bar-Peled L."/>
            <person name="Schweitzer L.D."/>
            <person name="Zoncu R."/>
            <person name="Sabatini D.M."/>
        </authorList>
    </citation>
    <scope>FUNCTION IN MTORC1 SIGNALING</scope>
    <scope>IDENTIFICATION IN RAGULATOR COMPLEX</scope>
    <scope>INTERACTION WITH MTORC1 COMPLEX AND RAG GTPASES</scope>
    <scope>SUBCELLULAR LOCATION</scope>
</reference>
<reference key="6">
    <citation type="journal article" date="2012" name="Proc. Natl. Acad. Sci. U.S.A.">
        <title>N-terminal acetylome analyses and functional insights of the N-terminal acetyltransferase NatB.</title>
        <authorList>
            <person name="Van Damme P."/>
            <person name="Lasa M."/>
            <person name="Polevoda B."/>
            <person name="Gazquez C."/>
            <person name="Elosegui-Artola A."/>
            <person name="Kim D.S."/>
            <person name="De Juan-Pardo E."/>
            <person name="Demeyer K."/>
            <person name="Hole K."/>
            <person name="Larrea E."/>
            <person name="Timmerman E."/>
            <person name="Prieto J."/>
            <person name="Arnesen T."/>
            <person name="Sherman F."/>
            <person name="Gevaert K."/>
            <person name="Aldabe R."/>
        </authorList>
    </citation>
    <scope>ACETYLATION [LARGE SCALE ANALYSIS] AT MET-1 AND THR-2</scope>
    <scope>CLEAVAGE OF INITIATOR METHIONINE [LARGE SCALE ANALYSIS]</scope>
    <scope>IDENTIFICATION BY MASS SPECTROMETRY [LARGE SCALE ANALYSIS]</scope>
</reference>
<reference key="7">
    <citation type="journal article" date="2013" name="J. Proteome Res.">
        <title>Toward a comprehensive characterization of a human cancer cell phosphoproteome.</title>
        <authorList>
            <person name="Zhou H."/>
            <person name="Di Palma S."/>
            <person name="Preisinger C."/>
            <person name="Peng M."/>
            <person name="Polat A.N."/>
            <person name="Heck A.J."/>
            <person name="Mohammed S."/>
        </authorList>
    </citation>
    <scope>IDENTIFICATION BY MASS SPECTROMETRY [LARGE SCALE ANALYSIS]</scope>
    <source>
        <tissue>Erythroleukemia</tissue>
    </source>
</reference>
<reference key="8">
    <citation type="journal article" date="2015" name="Nature">
        <title>SLC38A9 is a component of the lysosomal amino acid sensing machinery that controls mTORC1.</title>
        <authorList>
            <person name="Rebsamen M."/>
            <person name="Pochini L."/>
            <person name="Stasyk T."/>
            <person name="de Araujo M.E."/>
            <person name="Galluccio M."/>
            <person name="Kandasamy R.K."/>
            <person name="Snijder B."/>
            <person name="Fauster A."/>
            <person name="Rudashevskaya E.L."/>
            <person name="Bruckner M."/>
            <person name="Scorzoni S."/>
            <person name="Filipek P.A."/>
            <person name="Huber K.V."/>
            <person name="Bigenzahn J.W."/>
            <person name="Heinz L.X."/>
            <person name="Kraft C."/>
            <person name="Bennett K.L."/>
            <person name="Indiveri C."/>
            <person name="Huber L.A."/>
            <person name="Superti-Furga G."/>
        </authorList>
    </citation>
    <scope>INTERACTION WITH SLC38A9</scope>
</reference>
<reference key="9">
    <citation type="journal article" date="2015" name="Proteomics">
        <title>N-terminome analysis of the human mitochondrial proteome.</title>
        <authorList>
            <person name="Vaca Jacome A.S."/>
            <person name="Rabilloud T."/>
            <person name="Schaeffer-Reiss C."/>
            <person name="Rompais M."/>
            <person name="Ayoub D."/>
            <person name="Lane L."/>
            <person name="Bairoch A."/>
            <person name="Van Dorsselaer A."/>
            <person name="Carapito C."/>
        </authorList>
    </citation>
    <scope>ACETYLATION [LARGE SCALE ANALYSIS] AT THR-2</scope>
    <scope>CLEAVAGE OF INITIATOR METHIONINE [LARGE SCALE ANALYSIS]</scope>
    <scope>IDENTIFICATION BY MASS SPECTROMETRY [LARGE SCALE ANALYSIS]</scope>
</reference>
<reference key="10">
    <citation type="journal article" date="2015" name="Science">
        <title>Metabolism. Lysosomal amino acid transporter SLC38A9 signals arginine sufficiency to mTORC1.</title>
        <authorList>
            <person name="Wang S."/>
            <person name="Tsun Z.Y."/>
            <person name="Wolfson R.L."/>
            <person name="Shen K."/>
            <person name="Wyant G.A."/>
            <person name="Plovanich M.E."/>
            <person name="Yuan E.D."/>
            <person name="Jones T.D."/>
            <person name="Chantranupong L."/>
            <person name="Comb W."/>
            <person name="Wang T."/>
            <person name="Bar-Peled L."/>
            <person name="Zoncu R."/>
            <person name="Straub C."/>
            <person name="Kim C."/>
            <person name="Park J."/>
            <person name="Sabatini B.L."/>
            <person name="Sabatini D.M."/>
        </authorList>
    </citation>
    <scope>INTERACTION WITH SLC38A9</scope>
</reference>
<reference key="11">
    <citation type="journal article" date="2018" name="Proc. Natl. Acad. Sci. U.S.A.">
        <title>Ragulator and SLC38A9 activate the Rag GTPases through noncanonical GEF mechanisms.</title>
        <authorList>
            <person name="Shen K."/>
            <person name="Sabatini D.M."/>
        </authorList>
    </citation>
    <scope>FUNCTION</scope>
</reference>
<reference evidence="27 28" key="12">
    <citation type="journal article" date="2017" name="Cell Discov.">
        <title>Structural insight into the Ragulator complex which anchors mTORC1 to the lysosomal membrane.</title>
        <authorList>
            <person name="Mu Z."/>
            <person name="Wang L."/>
            <person name="Deng W."/>
            <person name="Wang J."/>
            <person name="Wu G."/>
        </authorList>
    </citation>
    <scope>X-RAY CRYSTALLOGRAPHY (2.03 ANGSTROMS) OF 9-92 IN COMPLEX WITH LAMTOR1; LAMTOR2; LAMTOR3 AND LAMTOR5</scope>
    <scope>IDENTIFICATION IN RAGULATOR COMPLEX</scope>
</reference>
<reference evidence="29" key="13">
    <citation type="journal article" date="2017" name="Mol. Cell">
        <title>Hybrid Structure of the RagA/C-Ragulator mTORC1 Activation Complex.</title>
        <authorList>
            <person name="Su M.Y."/>
            <person name="Morris K.L."/>
            <person name="Kim D.J."/>
            <person name="Fu Y."/>
            <person name="Lawrence R."/>
            <person name="Stjepanovic G."/>
            <person name="Zoncu R."/>
            <person name="Hurley J.H."/>
        </authorList>
    </citation>
    <scope>X-RAY CRYSTALLOGRAPHY (1.42 ANGSTROMS) IN COMPLEX WITH LAMTOR1; LAMTOR2; LAMTOR3 AND LAMTOR5</scope>
    <scope>FUNCTION</scope>
    <scope>IDENTIFICATION IN RAGULATOR COMPLEX</scope>
</reference>
<reference evidence="24 25 26" key="14">
    <citation type="journal article" date="2017" name="Nat. Commun.">
        <title>Structural basis for Ragulator functioning as a scaffold in membrane-anchoring of Rag GTPases and mTORC1.</title>
        <authorList>
            <person name="Zhang T."/>
            <person name="Wang R."/>
            <person name="Wang Z."/>
            <person name="Wang X."/>
            <person name="Wang F."/>
            <person name="Ding J."/>
        </authorList>
    </citation>
    <scope>X-RAY CRYSTALLOGRAPHY (2.65 ANGSTROMS) IN COMPLEX WITH LAMTOR1; LAMTOR2; LAMTOR3 AND LAMTOR5</scope>
    <scope>IDENTIFICATION IN RAGULATOR COMPLEX</scope>
</reference>
<reference evidence="22 23" key="15">
    <citation type="journal article" date="2017" name="Nat. Commun.">
        <title>Structural basis for the assembly of the Ragulator-Rag GTPase complex.</title>
        <authorList>
            <person name="Yonehara R."/>
            <person name="Nada S."/>
            <person name="Nakai T."/>
            <person name="Nakai M."/>
            <person name="Kitamura A."/>
            <person name="Ogawa A."/>
            <person name="Nakatsumi H."/>
            <person name="Nakayama K.I."/>
            <person name="Li S."/>
            <person name="Standley D.M."/>
            <person name="Yamashita E."/>
            <person name="Nakagawa A."/>
            <person name="Okada M."/>
        </authorList>
    </citation>
    <scope>X-RAY CRYSTALLOGRAPHY (2.02 ANGSTROMS) IN COMPLEX WITH RRAGA; RRAGC; LAMTOR1; LAMTOR2; LAMTOR3 AND LAMTOR5</scope>
    <scope>FUNCTION</scope>
    <scope>IDENTIFICATION IN RAGULATOR COMPLEX</scope>
</reference>
<reference evidence="30 31" key="16">
    <citation type="journal article" date="2017" name="Science">
        <title>Crystal structure of the human lysosomal mTORC1 scaffold complex and its impact on signaling.</title>
        <authorList>
            <person name="de Araujo M.E.G."/>
            <person name="Naschberger A."/>
            <person name="Fuernrohr B.G."/>
            <person name="Stasyk T."/>
            <person name="Dunzendorfer-Matt T."/>
            <person name="Lechner S."/>
            <person name="Welti S."/>
            <person name="Kremser L."/>
            <person name="Shivalingaiah G."/>
            <person name="Offterdinger M."/>
            <person name="Lindner H.H."/>
            <person name="Huber L.A."/>
            <person name="Scheffzek K."/>
        </authorList>
    </citation>
    <scope>X-RAY CRYSTALLOGRAPHY (2.90 ANGSTROMS) OF 183-313 IN COMPLEX WITH RRAGA; RRAGC; LAMTOR1; LAMTOR2; LAMTOR3 AND LAMTOR5</scope>
    <scope>FUNCTION</scope>
    <scope>IDENTIFICATION IN RAGULATOR COMPLEX</scope>
</reference>
<reference evidence="34" key="17">
    <citation type="journal article" date="2019" name="Cell">
        <title>Cryo-EM structure of the human FLCN-FNIP2-Rag-Ragulator complex.</title>
        <authorList>
            <person name="Shen K."/>
            <person name="Rogala K.B."/>
            <person name="Chou H.T."/>
            <person name="Huang R.K."/>
            <person name="Yu Z."/>
            <person name="Sabatini D.M."/>
        </authorList>
    </citation>
    <scope>STRUCTURE BY ELECTRON MICROSCOPY (3.31 ANGSTROMS) IN COMPLEX WITH FLCN; FNIP2; RRAGA; RRAGC; LAMTOR1; LAMTOR2; LAMTOR3 AND LAMTOR5</scope>
    <scope>IDENTIFICATION IN THE LFC COMPLEX</scope>
</reference>
<reference evidence="21" key="18">
    <citation type="journal article" date="2019" name="FEBS Open Bio">
        <title>C7orf59/LAMTOR4 phosphorylation and structural flexibility modulate Ragulator assembly.</title>
        <authorList>
            <person name="Rasheed N."/>
            <person name="Lima T.B."/>
            <person name="Mercaldi G.F."/>
            <person name="Nascimento A.F.Z."/>
            <person name="Silva A.L.S."/>
            <person name="Righetto G.L."/>
            <person name="Bar-Peled L."/>
            <person name="Shen K."/>
            <person name="Sabatini D.M."/>
            <person name="Gozzo F.C."/>
            <person name="Aparicio R."/>
            <person name="Smetana J.H.C."/>
        </authorList>
    </citation>
    <scope>X-RAY CRYSTALLOGRAPHY (2.89 ANGSTROMS) IN COMPLEX WITH LAMTOR5</scope>
    <scope>PHOSPHORYLATION AT SER-67</scope>
    <scope>MUTAGENESIS OF 34-GLU-ASN-35; 36-ASP-GLU-37 AND SER-67</scope>
</reference>
<reference evidence="33" key="19">
    <citation type="journal article" date="2019" name="Science">
        <title>Structural basis for the docking of mTORC1 on the lysosomal surface.</title>
        <authorList>
            <person name="Rogala K.B."/>
            <person name="Gu X."/>
            <person name="Kedir J.F."/>
            <person name="Abu-Remaileh M."/>
            <person name="Bianchi L.F."/>
            <person name="Bottino A.M.S."/>
            <person name="Dueholm R."/>
            <person name="Niehaus A."/>
            <person name="Overwijn D."/>
            <person name="Fils A.P."/>
            <person name="Zhou S.X."/>
            <person name="Leary D."/>
            <person name="Laqtom N.N."/>
            <person name="Brignole E.J."/>
            <person name="Sabatini D.M."/>
        </authorList>
    </citation>
    <scope>STRUCTURE BY ELECTRON MICROSCOPY (3.18 ANGSTROMS) IN COMPLEX WITH RRAGA; RRAGC; RPTOR; LAMTOR1; LAMTOR2; LAMTOR3 AND LAMTOR5</scope>
    <scope>IDENTIFICATION IN THE RAGULATOR COMPLEX</scope>
</reference>
<reference evidence="32" key="20">
    <citation type="journal article" date="2019" name="Science">
        <title>Structural mechanism of a Rag GTPase activation checkpoint by the lysosomal folliculin complex.</title>
        <authorList>
            <person name="Lawrence R.E."/>
            <person name="Fromm S.A."/>
            <person name="Fu Y."/>
            <person name="Yokom A.L."/>
            <person name="Kim D.J."/>
            <person name="Thelen A.M."/>
            <person name="Young L.N."/>
            <person name="Lim C.Y."/>
            <person name="Samelson A.J."/>
            <person name="Hurley J.H."/>
            <person name="Zoncu R."/>
        </authorList>
    </citation>
    <scope>STRUCTURE BY ELECTRON MICROSCOPY (3.60 ANGSTROMS) IN COMPLEX WITH FLCN; FNIP2; RRAGA; RRAGC; LAMTOR1; LAMTOR2; LAMTOR3 AND LAMTOR5</scope>
    <scope>IDENTIFICATION IN THE LFC COMPLEX</scope>
</reference>
<reference evidence="35 36" key="21">
    <citation type="journal article" date="2020" name="Nat. Struct. Mol. Biol.">
        <title>Structural mechanism for amino acid-dependent Rag GTPase nucleotide state switching by SLC38A9.</title>
        <authorList>
            <person name="Fromm S.A."/>
            <person name="Lawrence R.E."/>
            <person name="Hurley J.H."/>
        </authorList>
    </citation>
    <scope>STRUCTURE BY ELECTRON MICROSCOPY (3.20 ANGSTROMS) IN COMPLEX WITH SLC38A9; LAMTOR1; LAMTOR2; LAMTOR3; LAMTOR5 AND THE RAG GTPASES HETERODIMER (RRAGA AND RRAGC)</scope>
    <scope>SUBUNIT</scope>
</reference>
<reference evidence="37 38 39" key="22">
    <citation type="journal article" date="2022" name="Mol. Cell">
        <title>Cryo-EM structures of the human GATOR1-Rag-Ragulator complex reveal a spatial-constraint regulated GAP mechanism.</title>
        <authorList>
            <person name="Egri S.B."/>
            <person name="Ouch C."/>
            <person name="Chou H.T."/>
            <person name="Yu Z."/>
            <person name="Song K."/>
            <person name="Xu C."/>
            <person name="Shen K."/>
        </authorList>
    </citation>
    <scope>STRUCTURE BY ELECTRON MICROSCOPY (3.90 ANGSTROMS) IN COMPLEX WITH RRAGA; RRAGC; DEPDC5; NPRL2; NPRL3; LAMTOR1; LAMTOR2; LAMTOR3 AND LAMTOR5</scope>
    <scope>IDENTIFICATION IN THE RAGULATOR COMPLEX</scope>
</reference>
<reference evidence="43" key="23">
    <citation type="journal article" date="2022" name="Sci. Adv.">
        <title>Structural basis for FLCN RagC GAP activation in MiT-TFE substrate-selective mTORC1 regulation.</title>
        <authorList>
            <person name="Jansen R.M."/>
            <person name="Peruzzo R."/>
            <person name="Fromm S.A."/>
            <person name="Yokom A.L."/>
            <person name="Zoncu R."/>
            <person name="Hurley J.H."/>
        </authorList>
    </citation>
    <scope>STRUCTURE BY ELECTRON MICROSCOPY (3.53 ANGSTROMS) IN COMPLEX WITH RRAGA; RRAGC; LAMTOR1; LAMTOR2; LAMTOR3; LAMTOR5; FNIP2; FLCN AND SLC38A9</scope>
    <scope>IDENTIFICATION IN THE RAGULATOR COMPLEX</scope>
</reference>
<reference evidence="40 41 42" key="24">
    <citation type="journal article" date="2023" name="Nature">
        <title>Structure of the lysosomal mTORC1-TFEB-Rag-Ragulator megacomplex.</title>
        <authorList>
            <person name="Cui Z."/>
            <person name="Napolitano G."/>
            <person name="de Araujo M.E.G."/>
            <person name="Esposito A."/>
            <person name="Monfregola J."/>
            <person name="Huber L.A."/>
            <person name="Ballabio A."/>
            <person name="Hurley J.H."/>
        </authorList>
    </citation>
    <scope>STRUCTURE BY ELECTRON MICROSCOPY (2.90 ANGSTROMS) IN COMPLEX WITH RRAGA; RRAGC; LAMTOR1; LAMTOR2; LAMTOR3; LAMTOR5; RPTOR; MLST8; MTOR AND TFEB</scope>
    <scope>IDENTIFICATION IN THE RAGULATOR COMPLEX</scope>
</reference>
<sequence>MTSALTQGLERIPDQLGYLVLSEGAVLASSGDLENDEQAASAISELVSTACGFRLHRGMNVPFKRLSVVFGEHTLLVTVSGQRVFVVKRQNRGREPIDV</sequence>
<protein>
    <recommendedName>
        <fullName evidence="19">Ragulator complex protein LAMTOR4</fullName>
    </recommendedName>
    <alternativeName>
        <fullName>Late endosomal/lysosomal adaptor and MAPK and MTOR activator 4</fullName>
    </alternativeName>
    <component>
        <recommendedName>
            <fullName>Ragulator complex protein LAMTOR4, N-terminally processed</fullName>
        </recommendedName>
    </component>
</protein>
<dbReference type="EMBL" id="CH471091">
    <property type="protein sequence ID" value="EAW76585.1"/>
    <property type="molecule type" value="Genomic_DNA"/>
</dbReference>
<dbReference type="EMBL" id="BC063401">
    <property type="protein sequence ID" value="AAH63401.1"/>
    <property type="molecule type" value="mRNA"/>
</dbReference>
<dbReference type="EMBL" id="BC105609">
    <property type="protein sequence ID" value="AAI05610.1"/>
    <property type="molecule type" value="mRNA"/>
</dbReference>
<dbReference type="EMBL" id="BC130553">
    <property type="protein sequence ID" value="AAI30554.1"/>
    <property type="molecule type" value="mRNA"/>
</dbReference>
<dbReference type="EMBL" id="BC130559">
    <property type="protein sequence ID" value="AAI30560.1"/>
    <property type="molecule type" value="mRNA"/>
</dbReference>
<dbReference type="CCDS" id="CCDS34702.1"/>
<dbReference type="RefSeq" id="NP_001008396.1">
    <property type="nucleotide sequence ID" value="NM_001008395.4"/>
</dbReference>
<dbReference type="RefSeq" id="XP_016867687.1">
    <property type="nucleotide sequence ID" value="XM_017012198.1"/>
</dbReference>
<dbReference type="RefSeq" id="XP_054214161.1">
    <property type="nucleotide sequence ID" value="XM_054358186.1"/>
</dbReference>
<dbReference type="PDB" id="5VOK">
    <property type="method" value="X-ray"/>
    <property type="resolution" value="2.89 A"/>
    <property type="chains" value="B/D/F/H=1-99"/>
</dbReference>
<dbReference type="PDB" id="5X6U">
    <property type="method" value="X-ray"/>
    <property type="resolution" value="2.40 A"/>
    <property type="chains" value="D=1-99"/>
</dbReference>
<dbReference type="PDB" id="5X6V">
    <property type="method" value="X-ray"/>
    <property type="resolution" value="2.02 A"/>
    <property type="chains" value="D=1-99"/>
</dbReference>
<dbReference type="PDB" id="5Y38">
    <property type="method" value="X-ray"/>
    <property type="resolution" value="2.80 A"/>
    <property type="chains" value="B=1-99"/>
</dbReference>
<dbReference type="PDB" id="5Y39">
    <property type="method" value="X-ray"/>
    <property type="resolution" value="2.65 A"/>
    <property type="chains" value="D/I=1-99"/>
</dbReference>
<dbReference type="PDB" id="5Y3A">
    <property type="method" value="X-ray"/>
    <property type="resolution" value="2.90 A"/>
    <property type="chains" value="D/I=1-99"/>
</dbReference>
<dbReference type="PDB" id="5YK3">
    <property type="method" value="X-ray"/>
    <property type="resolution" value="3.01 A"/>
    <property type="chains" value="D/I=1-96"/>
</dbReference>
<dbReference type="PDB" id="5YK5">
    <property type="method" value="X-ray"/>
    <property type="resolution" value="2.03 A"/>
    <property type="chains" value="A=9-92, C=9-91"/>
</dbReference>
<dbReference type="PDB" id="6B9X">
    <property type="method" value="X-ray"/>
    <property type="resolution" value="1.42 A"/>
    <property type="chains" value="D=1-99"/>
</dbReference>
<dbReference type="PDB" id="6EHP">
    <property type="method" value="X-ray"/>
    <property type="resolution" value="2.30 A"/>
    <property type="chains" value="D=1-99"/>
</dbReference>
<dbReference type="PDB" id="6EHR">
    <property type="method" value="X-ray"/>
    <property type="resolution" value="2.90 A"/>
    <property type="chains" value="D=1-99"/>
</dbReference>
<dbReference type="PDB" id="6NZD">
    <property type="method" value="EM"/>
    <property type="resolution" value="3.60 A"/>
    <property type="chains" value="D=1-99"/>
</dbReference>
<dbReference type="PDB" id="6U62">
    <property type="method" value="EM"/>
    <property type="resolution" value="3.18 A"/>
    <property type="chains" value="G=2-99"/>
</dbReference>
<dbReference type="PDB" id="6ULG">
    <property type="method" value="EM"/>
    <property type="resolution" value="3.31 A"/>
    <property type="chains" value="D=1-99"/>
</dbReference>
<dbReference type="PDB" id="6WJ2">
    <property type="method" value="EM"/>
    <property type="resolution" value="3.20 A"/>
    <property type="chains" value="D=1-99"/>
</dbReference>
<dbReference type="PDB" id="6WJ3">
    <property type="method" value="EM"/>
    <property type="resolution" value="3.90 A"/>
    <property type="chains" value="D=1-99"/>
</dbReference>
<dbReference type="PDB" id="7T3A">
    <property type="method" value="EM"/>
    <property type="resolution" value="4.00 A"/>
    <property type="chains" value="P=1-99"/>
</dbReference>
<dbReference type="PDB" id="7T3B">
    <property type="method" value="EM"/>
    <property type="resolution" value="3.90 A"/>
    <property type="chains" value="I=1-99"/>
</dbReference>
<dbReference type="PDB" id="7T3C">
    <property type="method" value="EM"/>
    <property type="resolution" value="4.00 A"/>
    <property type="chains" value="I/P=1-99"/>
</dbReference>
<dbReference type="PDB" id="7UX2">
    <property type="method" value="EM"/>
    <property type="resolution" value="2.90 A"/>
    <property type="chains" value="G/N=1-99"/>
</dbReference>
<dbReference type="PDB" id="7UXC">
    <property type="method" value="EM"/>
    <property type="resolution" value="3.20 A"/>
    <property type="chains" value="I/P=1-99"/>
</dbReference>
<dbReference type="PDB" id="7UXH">
    <property type="method" value="EM"/>
    <property type="resolution" value="3.20 A"/>
    <property type="chains" value="K/R/a/h=1-99"/>
</dbReference>
<dbReference type="PDB" id="8DHB">
    <property type="method" value="EM"/>
    <property type="resolution" value="3.53 A"/>
    <property type="chains" value="F=1-99"/>
</dbReference>
<dbReference type="PDBsum" id="5VOK"/>
<dbReference type="PDBsum" id="5X6U"/>
<dbReference type="PDBsum" id="5X6V"/>
<dbReference type="PDBsum" id="5Y38"/>
<dbReference type="PDBsum" id="5Y39"/>
<dbReference type="PDBsum" id="5Y3A"/>
<dbReference type="PDBsum" id="5YK3"/>
<dbReference type="PDBsum" id="5YK5"/>
<dbReference type="PDBsum" id="6B9X"/>
<dbReference type="PDBsum" id="6EHP"/>
<dbReference type="PDBsum" id="6EHR"/>
<dbReference type="PDBsum" id="6NZD"/>
<dbReference type="PDBsum" id="6U62"/>
<dbReference type="PDBsum" id="6ULG"/>
<dbReference type="PDBsum" id="6WJ2"/>
<dbReference type="PDBsum" id="6WJ3"/>
<dbReference type="PDBsum" id="7T3A"/>
<dbReference type="PDBsum" id="7T3B"/>
<dbReference type="PDBsum" id="7T3C"/>
<dbReference type="PDBsum" id="7UX2"/>
<dbReference type="PDBsum" id="7UXC"/>
<dbReference type="PDBsum" id="7UXH"/>
<dbReference type="PDBsum" id="8DHB"/>
<dbReference type="EMDB" id="EMD-0554"/>
<dbReference type="EMDB" id="EMD-20660"/>
<dbReference type="EMDB" id="EMD-20814"/>
<dbReference type="EMDB" id="EMD-21686"/>
<dbReference type="EMDB" id="EMD-21687"/>
<dbReference type="EMDB" id="EMD-25652"/>
<dbReference type="EMDB" id="EMD-25653"/>
<dbReference type="EMDB" id="EMD-25654"/>
<dbReference type="EMDB" id="EMD-26846"/>
<dbReference type="EMDB" id="EMD-26857"/>
<dbReference type="EMDB" id="EMD-26861"/>
<dbReference type="EMDB" id="EMD-27435"/>
<dbReference type="SMR" id="Q0VGL1"/>
<dbReference type="BioGRID" id="133178">
    <property type="interactions" value="47"/>
</dbReference>
<dbReference type="ComplexPortal" id="CPX-4741">
    <property type="entry name" value="Ragulator complex"/>
</dbReference>
<dbReference type="CORUM" id="Q0VGL1"/>
<dbReference type="DIP" id="DIP-61481N"/>
<dbReference type="FunCoup" id="Q0VGL1">
    <property type="interactions" value="1407"/>
</dbReference>
<dbReference type="IntAct" id="Q0VGL1">
    <property type="interactions" value="33"/>
</dbReference>
<dbReference type="STRING" id="9606.ENSP00000343118"/>
<dbReference type="iPTMnet" id="Q0VGL1"/>
<dbReference type="PhosphoSitePlus" id="Q0VGL1"/>
<dbReference type="SwissPalm" id="Q0VGL1"/>
<dbReference type="BioMuta" id="LAMTOR4"/>
<dbReference type="DMDM" id="121940512"/>
<dbReference type="jPOST" id="Q0VGL1"/>
<dbReference type="MassIVE" id="Q0VGL1"/>
<dbReference type="PaxDb" id="9606-ENSP00000343118"/>
<dbReference type="PeptideAtlas" id="Q0VGL1"/>
<dbReference type="ProteomicsDB" id="58845"/>
<dbReference type="Pumba" id="Q0VGL1"/>
<dbReference type="TopDownProteomics" id="Q0VGL1"/>
<dbReference type="Antibodypedia" id="16403">
    <property type="antibodies" value="61 antibodies from 16 providers"/>
</dbReference>
<dbReference type="DNASU" id="389541"/>
<dbReference type="Ensembl" id="ENST00000341942.10">
    <property type="protein sequence ID" value="ENSP00000343118.5"/>
    <property type="gene ID" value="ENSG00000188186.11"/>
</dbReference>
<dbReference type="GeneID" id="389541"/>
<dbReference type="KEGG" id="hsa:389541"/>
<dbReference type="MANE-Select" id="ENST00000341942.10">
    <property type="protein sequence ID" value="ENSP00000343118.5"/>
    <property type="RefSeq nucleotide sequence ID" value="NM_001008395.4"/>
    <property type="RefSeq protein sequence ID" value="NP_001008396.1"/>
</dbReference>
<dbReference type="UCSC" id="uc003utq.3">
    <property type="organism name" value="human"/>
</dbReference>
<dbReference type="AGR" id="HGNC:33772"/>
<dbReference type="CTD" id="389541"/>
<dbReference type="DisGeNET" id="389541"/>
<dbReference type="GeneCards" id="LAMTOR4"/>
<dbReference type="HGNC" id="HGNC:33772">
    <property type="gene designation" value="LAMTOR4"/>
</dbReference>
<dbReference type="HPA" id="ENSG00000188186">
    <property type="expression patterns" value="Low tissue specificity"/>
</dbReference>
<dbReference type="MIM" id="618834">
    <property type="type" value="gene"/>
</dbReference>
<dbReference type="neXtProt" id="NX_Q0VGL1"/>
<dbReference type="OpenTargets" id="ENSG00000188186"/>
<dbReference type="PharmGKB" id="PA162380687"/>
<dbReference type="VEuPathDB" id="HostDB:ENSG00000188186"/>
<dbReference type="eggNOG" id="ENOG502S3B2">
    <property type="taxonomic scope" value="Eukaryota"/>
</dbReference>
<dbReference type="GeneTree" id="ENSGT00390000016053"/>
<dbReference type="HOGENOM" id="CLU_137556_1_0_1"/>
<dbReference type="InParanoid" id="Q0VGL1"/>
<dbReference type="OMA" id="MEMVRTA"/>
<dbReference type="OrthoDB" id="275011at2759"/>
<dbReference type="PAN-GO" id="Q0VGL1">
    <property type="GO annotations" value="5 GO annotations based on evolutionary models"/>
</dbReference>
<dbReference type="PhylomeDB" id="Q0VGL1"/>
<dbReference type="TreeFam" id="TF324352"/>
<dbReference type="PathwayCommons" id="Q0VGL1"/>
<dbReference type="Reactome" id="R-HSA-1632852">
    <property type="pathway name" value="Macroautophagy"/>
</dbReference>
<dbReference type="Reactome" id="R-HSA-165159">
    <property type="pathway name" value="MTOR signalling"/>
</dbReference>
<dbReference type="Reactome" id="R-HSA-166208">
    <property type="pathway name" value="mTORC1-mediated signalling"/>
</dbReference>
<dbReference type="Reactome" id="R-HSA-380972">
    <property type="pathway name" value="Energy dependent regulation of mTOR by LKB1-AMPK"/>
</dbReference>
<dbReference type="Reactome" id="R-HSA-5628897">
    <property type="pathway name" value="TP53 Regulates Metabolic Genes"/>
</dbReference>
<dbReference type="Reactome" id="R-HSA-8943724">
    <property type="pathway name" value="Regulation of PTEN gene transcription"/>
</dbReference>
<dbReference type="Reactome" id="R-HSA-9639288">
    <property type="pathway name" value="Amino acids regulate mTORC1"/>
</dbReference>
<dbReference type="SignaLink" id="Q0VGL1"/>
<dbReference type="SIGNOR" id="Q0VGL1"/>
<dbReference type="BioGRID-ORCS" id="389541">
    <property type="hits" value="345 hits in 1166 CRISPR screens"/>
</dbReference>
<dbReference type="ChiTaRS" id="LAMTOR4">
    <property type="organism name" value="human"/>
</dbReference>
<dbReference type="GenomeRNAi" id="389541"/>
<dbReference type="Pharos" id="Q0VGL1">
    <property type="development level" value="Tbio"/>
</dbReference>
<dbReference type="PRO" id="PR:Q0VGL1"/>
<dbReference type="Proteomes" id="UP000005640">
    <property type="component" value="Chromosome 7"/>
</dbReference>
<dbReference type="RNAct" id="Q0VGL1">
    <property type="molecule type" value="protein"/>
</dbReference>
<dbReference type="Bgee" id="ENSG00000188186">
    <property type="expression patterns" value="Expressed in skin of abdomen and 183 other cell types or tissues"/>
</dbReference>
<dbReference type="ExpressionAtlas" id="Q0VGL1">
    <property type="expression patterns" value="baseline and differential"/>
</dbReference>
<dbReference type="GO" id="GO:1990877">
    <property type="term" value="C:FNIP-folliculin RagC/D GAP"/>
    <property type="evidence" value="ECO:0000314"/>
    <property type="project" value="UniProtKB"/>
</dbReference>
<dbReference type="GO" id="GO:0043231">
    <property type="term" value="C:intracellular membrane-bounded organelle"/>
    <property type="evidence" value="ECO:0000314"/>
    <property type="project" value="HPA"/>
</dbReference>
<dbReference type="GO" id="GO:0031902">
    <property type="term" value="C:late endosome membrane"/>
    <property type="evidence" value="ECO:0000303"/>
    <property type="project" value="ComplexPortal"/>
</dbReference>
<dbReference type="GO" id="GO:0005765">
    <property type="term" value="C:lysosomal membrane"/>
    <property type="evidence" value="ECO:0000314"/>
    <property type="project" value="UniProtKB"/>
</dbReference>
<dbReference type="GO" id="GO:0005764">
    <property type="term" value="C:lysosome"/>
    <property type="evidence" value="ECO:0000314"/>
    <property type="project" value="UniProtKB"/>
</dbReference>
<dbReference type="GO" id="GO:0071986">
    <property type="term" value="C:Ragulator complex"/>
    <property type="evidence" value="ECO:0000314"/>
    <property type="project" value="UniProtKB"/>
</dbReference>
<dbReference type="GO" id="GO:0071230">
    <property type="term" value="P:cellular response to amino acid stimulus"/>
    <property type="evidence" value="ECO:0000314"/>
    <property type="project" value="ComplexPortal"/>
</dbReference>
<dbReference type="GO" id="GO:0032008">
    <property type="term" value="P:positive regulation of TOR signaling"/>
    <property type="evidence" value="ECO:0000315"/>
    <property type="project" value="UniProtKB"/>
</dbReference>
<dbReference type="GO" id="GO:1904263">
    <property type="term" value="P:positive regulation of TORC1 signaling"/>
    <property type="evidence" value="ECO:0000314"/>
    <property type="project" value="UniProtKB"/>
</dbReference>
<dbReference type="GO" id="GO:0061462">
    <property type="term" value="P:protein localization to lysosome"/>
    <property type="evidence" value="ECO:0000315"/>
    <property type="project" value="UniProtKB"/>
</dbReference>
<dbReference type="GO" id="GO:0008361">
    <property type="term" value="P:regulation of cell size"/>
    <property type="evidence" value="ECO:0000315"/>
    <property type="project" value="UniProtKB"/>
</dbReference>
<dbReference type="GO" id="GO:0038202">
    <property type="term" value="P:TORC1 signaling"/>
    <property type="evidence" value="ECO:0000303"/>
    <property type="project" value="ComplexPortal"/>
</dbReference>
<dbReference type="InterPro" id="IPR034601">
    <property type="entry name" value="LAMTOR4"/>
</dbReference>
<dbReference type="PANTHER" id="PTHR33967">
    <property type="entry name" value="RAGULATOR COMPLEX PROTEIN LAMTOR4"/>
    <property type="match status" value="1"/>
</dbReference>
<dbReference type="PANTHER" id="PTHR33967:SF1">
    <property type="entry name" value="RAGULATOR COMPLEX PROTEIN LAMTOR4"/>
    <property type="match status" value="1"/>
</dbReference>
<proteinExistence type="evidence at protein level"/>